<feature type="chain" id="PRO_1000085238" description="Chaperone protein DnaJ">
    <location>
        <begin position="1"/>
        <end position="384"/>
    </location>
</feature>
<feature type="domain" description="J" evidence="1">
    <location>
        <begin position="5"/>
        <end position="70"/>
    </location>
</feature>
<feature type="repeat" description="CXXCXGXG motif">
    <location>
        <begin position="151"/>
        <end position="158"/>
    </location>
</feature>
<feature type="repeat" description="CXXCXGXG motif">
    <location>
        <begin position="168"/>
        <end position="175"/>
    </location>
</feature>
<feature type="repeat" description="CXXCXGXG motif">
    <location>
        <begin position="190"/>
        <end position="197"/>
    </location>
</feature>
<feature type="repeat" description="CXXCXGXG motif">
    <location>
        <begin position="204"/>
        <end position="211"/>
    </location>
</feature>
<feature type="zinc finger region" description="CR-type" evidence="1">
    <location>
        <begin position="138"/>
        <end position="216"/>
    </location>
</feature>
<feature type="region of interest" description="Disordered" evidence="2">
    <location>
        <begin position="300"/>
        <end position="322"/>
    </location>
</feature>
<feature type="binding site" evidence="1">
    <location>
        <position position="151"/>
    </location>
    <ligand>
        <name>Zn(2+)</name>
        <dbReference type="ChEBI" id="CHEBI:29105"/>
        <label>1</label>
    </ligand>
</feature>
<feature type="binding site" evidence="1">
    <location>
        <position position="154"/>
    </location>
    <ligand>
        <name>Zn(2+)</name>
        <dbReference type="ChEBI" id="CHEBI:29105"/>
        <label>1</label>
    </ligand>
</feature>
<feature type="binding site" evidence="1">
    <location>
        <position position="168"/>
    </location>
    <ligand>
        <name>Zn(2+)</name>
        <dbReference type="ChEBI" id="CHEBI:29105"/>
        <label>2</label>
    </ligand>
</feature>
<feature type="binding site" evidence="1">
    <location>
        <position position="171"/>
    </location>
    <ligand>
        <name>Zn(2+)</name>
        <dbReference type="ChEBI" id="CHEBI:29105"/>
        <label>2</label>
    </ligand>
</feature>
<feature type="binding site" evidence="1">
    <location>
        <position position="190"/>
    </location>
    <ligand>
        <name>Zn(2+)</name>
        <dbReference type="ChEBI" id="CHEBI:29105"/>
        <label>2</label>
    </ligand>
</feature>
<feature type="binding site" evidence="1">
    <location>
        <position position="193"/>
    </location>
    <ligand>
        <name>Zn(2+)</name>
        <dbReference type="ChEBI" id="CHEBI:29105"/>
        <label>2</label>
    </ligand>
</feature>
<feature type="binding site" evidence="1">
    <location>
        <position position="204"/>
    </location>
    <ligand>
        <name>Zn(2+)</name>
        <dbReference type="ChEBI" id="CHEBI:29105"/>
        <label>1</label>
    </ligand>
</feature>
<feature type="binding site" evidence="1">
    <location>
        <position position="207"/>
    </location>
    <ligand>
        <name>Zn(2+)</name>
        <dbReference type="ChEBI" id="CHEBI:29105"/>
        <label>1</label>
    </ligand>
</feature>
<sequence>MAKRDYYEVLGVARGASADEIKKAYRAKAKQLHPDRNKDCKVSEAAFKEVNEAYECLKDDQKKAAYDRFGHAAFENGGGGFGRGNGHGDFGSAFADVFEDLFGDMMGRRAGGGGRSRASRGQDLRYNLRVSLEEAYNGAQKTINVPGSVACAACNGTGAEGAVEPATCPTCSGMGKVRATQGFFTVERTCPTCSGHGQIVKNPCQECRGAGRVQKERTLSVNIPAGVETGTRIRLAGEGDAGMRGGPAGDLYIFIEVREHPIFMRDGRMLACQVPVSMTTAALGGEIEVPTIDGGRSRVKVPPGTQSGKQLRLRGKGMPPLRHGPGLNGEAGDMLIELAVETPVNLTARQKELLREFEAINADNNPQTQGFFQKIKGFWDEMKG</sequence>
<dbReference type="EMBL" id="CP000489">
    <property type="protein sequence ID" value="ABL70394.1"/>
    <property type="molecule type" value="Genomic_DNA"/>
</dbReference>
<dbReference type="RefSeq" id="WP_011748587.1">
    <property type="nucleotide sequence ID" value="NC_008686.1"/>
</dbReference>
<dbReference type="SMR" id="A1B4F0"/>
<dbReference type="STRING" id="318586.Pden_2303"/>
<dbReference type="EnsemblBacteria" id="ABL70394">
    <property type="protein sequence ID" value="ABL70394"/>
    <property type="gene ID" value="Pden_2303"/>
</dbReference>
<dbReference type="GeneID" id="93450699"/>
<dbReference type="KEGG" id="pde:Pden_2303"/>
<dbReference type="eggNOG" id="COG0484">
    <property type="taxonomic scope" value="Bacteria"/>
</dbReference>
<dbReference type="HOGENOM" id="CLU_017633_0_7_5"/>
<dbReference type="OrthoDB" id="9779889at2"/>
<dbReference type="Proteomes" id="UP000000361">
    <property type="component" value="Chromosome 1"/>
</dbReference>
<dbReference type="GO" id="GO:0005737">
    <property type="term" value="C:cytoplasm"/>
    <property type="evidence" value="ECO:0007669"/>
    <property type="project" value="UniProtKB-SubCell"/>
</dbReference>
<dbReference type="GO" id="GO:0005524">
    <property type="term" value="F:ATP binding"/>
    <property type="evidence" value="ECO:0007669"/>
    <property type="project" value="InterPro"/>
</dbReference>
<dbReference type="GO" id="GO:0031072">
    <property type="term" value="F:heat shock protein binding"/>
    <property type="evidence" value="ECO:0007669"/>
    <property type="project" value="InterPro"/>
</dbReference>
<dbReference type="GO" id="GO:0051082">
    <property type="term" value="F:unfolded protein binding"/>
    <property type="evidence" value="ECO:0007669"/>
    <property type="project" value="UniProtKB-UniRule"/>
</dbReference>
<dbReference type="GO" id="GO:0008270">
    <property type="term" value="F:zinc ion binding"/>
    <property type="evidence" value="ECO:0007669"/>
    <property type="project" value="UniProtKB-UniRule"/>
</dbReference>
<dbReference type="GO" id="GO:0051085">
    <property type="term" value="P:chaperone cofactor-dependent protein refolding"/>
    <property type="evidence" value="ECO:0007669"/>
    <property type="project" value="TreeGrafter"/>
</dbReference>
<dbReference type="GO" id="GO:0006260">
    <property type="term" value="P:DNA replication"/>
    <property type="evidence" value="ECO:0007669"/>
    <property type="project" value="UniProtKB-KW"/>
</dbReference>
<dbReference type="GO" id="GO:0042026">
    <property type="term" value="P:protein refolding"/>
    <property type="evidence" value="ECO:0007669"/>
    <property type="project" value="TreeGrafter"/>
</dbReference>
<dbReference type="GO" id="GO:0009408">
    <property type="term" value="P:response to heat"/>
    <property type="evidence" value="ECO:0007669"/>
    <property type="project" value="InterPro"/>
</dbReference>
<dbReference type="CDD" id="cd06257">
    <property type="entry name" value="DnaJ"/>
    <property type="match status" value="1"/>
</dbReference>
<dbReference type="CDD" id="cd10747">
    <property type="entry name" value="DnaJ_C"/>
    <property type="match status" value="1"/>
</dbReference>
<dbReference type="CDD" id="cd10719">
    <property type="entry name" value="DnaJ_zf"/>
    <property type="match status" value="1"/>
</dbReference>
<dbReference type="FunFam" id="2.10.230.10:FF:000002">
    <property type="entry name" value="Molecular chaperone DnaJ"/>
    <property type="match status" value="1"/>
</dbReference>
<dbReference type="FunFam" id="2.60.260.20:FF:000004">
    <property type="entry name" value="Molecular chaperone DnaJ"/>
    <property type="match status" value="1"/>
</dbReference>
<dbReference type="Gene3D" id="1.10.287.110">
    <property type="entry name" value="DnaJ domain"/>
    <property type="match status" value="1"/>
</dbReference>
<dbReference type="Gene3D" id="2.10.230.10">
    <property type="entry name" value="Heat shock protein DnaJ, cysteine-rich domain"/>
    <property type="match status" value="1"/>
</dbReference>
<dbReference type="Gene3D" id="2.60.260.20">
    <property type="entry name" value="Urease metallochaperone UreE, N-terminal domain"/>
    <property type="match status" value="2"/>
</dbReference>
<dbReference type="HAMAP" id="MF_01152">
    <property type="entry name" value="DnaJ"/>
    <property type="match status" value="1"/>
</dbReference>
<dbReference type="InterPro" id="IPR012724">
    <property type="entry name" value="DnaJ"/>
</dbReference>
<dbReference type="InterPro" id="IPR002939">
    <property type="entry name" value="DnaJ_C"/>
</dbReference>
<dbReference type="InterPro" id="IPR001623">
    <property type="entry name" value="DnaJ_domain"/>
</dbReference>
<dbReference type="InterPro" id="IPR018253">
    <property type="entry name" value="DnaJ_domain_CS"/>
</dbReference>
<dbReference type="InterPro" id="IPR008971">
    <property type="entry name" value="HSP40/DnaJ_pept-bd"/>
</dbReference>
<dbReference type="InterPro" id="IPR001305">
    <property type="entry name" value="HSP_DnaJ_Cys-rich_dom"/>
</dbReference>
<dbReference type="InterPro" id="IPR036410">
    <property type="entry name" value="HSP_DnaJ_Cys-rich_dom_sf"/>
</dbReference>
<dbReference type="InterPro" id="IPR036869">
    <property type="entry name" value="J_dom_sf"/>
</dbReference>
<dbReference type="NCBIfam" id="TIGR02349">
    <property type="entry name" value="DnaJ_bact"/>
    <property type="match status" value="1"/>
</dbReference>
<dbReference type="NCBIfam" id="NF008035">
    <property type="entry name" value="PRK10767.1"/>
    <property type="match status" value="1"/>
</dbReference>
<dbReference type="PANTHER" id="PTHR43096:SF48">
    <property type="entry name" value="CHAPERONE PROTEIN DNAJ"/>
    <property type="match status" value="1"/>
</dbReference>
<dbReference type="PANTHER" id="PTHR43096">
    <property type="entry name" value="DNAJ HOMOLOG 1, MITOCHONDRIAL-RELATED"/>
    <property type="match status" value="1"/>
</dbReference>
<dbReference type="Pfam" id="PF00226">
    <property type="entry name" value="DnaJ"/>
    <property type="match status" value="1"/>
</dbReference>
<dbReference type="Pfam" id="PF01556">
    <property type="entry name" value="DnaJ_C"/>
    <property type="match status" value="1"/>
</dbReference>
<dbReference type="Pfam" id="PF00684">
    <property type="entry name" value="DnaJ_CXXCXGXG"/>
    <property type="match status" value="1"/>
</dbReference>
<dbReference type="PRINTS" id="PR00625">
    <property type="entry name" value="JDOMAIN"/>
</dbReference>
<dbReference type="SMART" id="SM00271">
    <property type="entry name" value="DnaJ"/>
    <property type="match status" value="1"/>
</dbReference>
<dbReference type="SUPFAM" id="SSF46565">
    <property type="entry name" value="Chaperone J-domain"/>
    <property type="match status" value="1"/>
</dbReference>
<dbReference type="SUPFAM" id="SSF57938">
    <property type="entry name" value="DnaJ/Hsp40 cysteine-rich domain"/>
    <property type="match status" value="1"/>
</dbReference>
<dbReference type="SUPFAM" id="SSF49493">
    <property type="entry name" value="HSP40/DnaJ peptide-binding domain"/>
    <property type="match status" value="2"/>
</dbReference>
<dbReference type="PROSITE" id="PS00636">
    <property type="entry name" value="DNAJ_1"/>
    <property type="match status" value="1"/>
</dbReference>
<dbReference type="PROSITE" id="PS50076">
    <property type="entry name" value="DNAJ_2"/>
    <property type="match status" value="1"/>
</dbReference>
<dbReference type="PROSITE" id="PS51188">
    <property type="entry name" value="ZF_CR"/>
    <property type="match status" value="1"/>
</dbReference>
<accession>A1B4F0</accession>
<reference key="1">
    <citation type="submission" date="2006-12" db="EMBL/GenBank/DDBJ databases">
        <title>Complete sequence of chromosome 1 of Paracoccus denitrificans PD1222.</title>
        <authorList>
            <person name="Copeland A."/>
            <person name="Lucas S."/>
            <person name="Lapidus A."/>
            <person name="Barry K."/>
            <person name="Detter J.C."/>
            <person name="Glavina del Rio T."/>
            <person name="Hammon N."/>
            <person name="Israni S."/>
            <person name="Dalin E."/>
            <person name="Tice H."/>
            <person name="Pitluck S."/>
            <person name="Munk A.C."/>
            <person name="Brettin T."/>
            <person name="Bruce D."/>
            <person name="Han C."/>
            <person name="Tapia R."/>
            <person name="Gilna P."/>
            <person name="Schmutz J."/>
            <person name="Larimer F."/>
            <person name="Land M."/>
            <person name="Hauser L."/>
            <person name="Kyrpides N."/>
            <person name="Lykidis A."/>
            <person name="Spiro S."/>
            <person name="Richardson D.J."/>
            <person name="Moir J.W.B."/>
            <person name="Ferguson S.J."/>
            <person name="van Spanning R.J.M."/>
            <person name="Richardson P."/>
        </authorList>
    </citation>
    <scope>NUCLEOTIDE SEQUENCE [LARGE SCALE GENOMIC DNA]</scope>
    <source>
        <strain>Pd 1222</strain>
    </source>
</reference>
<proteinExistence type="inferred from homology"/>
<organism>
    <name type="scientific">Paracoccus denitrificans (strain Pd 1222)</name>
    <dbReference type="NCBI Taxonomy" id="318586"/>
    <lineage>
        <taxon>Bacteria</taxon>
        <taxon>Pseudomonadati</taxon>
        <taxon>Pseudomonadota</taxon>
        <taxon>Alphaproteobacteria</taxon>
        <taxon>Rhodobacterales</taxon>
        <taxon>Paracoccaceae</taxon>
        <taxon>Paracoccus</taxon>
    </lineage>
</organism>
<evidence type="ECO:0000255" key="1">
    <source>
        <dbReference type="HAMAP-Rule" id="MF_01152"/>
    </source>
</evidence>
<evidence type="ECO:0000256" key="2">
    <source>
        <dbReference type="SAM" id="MobiDB-lite"/>
    </source>
</evidence>
<name>DNAJ_PARDP</name>
<protein>
    <recommendedName>
        <fullName evidence="1">Chaperone protein DnaJ</fullName>
    </recommendedName>
</protein>
<keyword id="KW-0143">Chaperone</keyword>
<keyword id="KW-0963">Cytoplasm</keyword>
<keyword id="KW-0235">DNA replication</keyword>
<keyword id="KW-0479">Metal-binding</keyword>
<keyword id="KW-1185">Reference proteome</keyword>
<keyword id="KW-0677">Repeat</keyword>
<keyword id="KW-0346">Stress response</keyword>
<keyword id="KW-0862">Zinc</keyword>
<keyword id="KW-0863">Zinc-finger</keyword>
<comment type="function">
    <text evidence="1">Participates actively in the response to hyperosmotic and heat shock by preventing the aggregation of stress-denatured proteins and by disaggregating proteins, also in an autonomous, DnaK-independent fashion. Unfolded proteins bind initially to DnaJ; upon interaction with the DnaJ-bound protein, DnaK hydrolyzes its bound ATP, resulting in the formation of a stable complex. GrpE releases ADP from DnaK; ATP binding to DnaK triggers the release of the substrate protein, thus completing the reaction cycle. Several rounds of ATP-dependent interactions between DnaJ, DnaK and GrpE are required for fully efficient folding. Also involved, together with DnaK and GrpE, in the DNA replication of plasmids through activation of initiation proteins.</text>
</comment>
<comment type="cofactor">
    <cofactor evidence="1">
        <name>Zn(2+)</name>
        <dbReference type="ChEBI" id="CHEBI:29105"/>
    </cofactor>
    <text evidence="1">Binds 2 Zn(2+) ions per monomer.</text>
</comment>
<comment type="subunit">
    <text evidence="1">Homodimer.</text>
</comment>
<comment type="subcellular location">
    <subcellularLocation>
        <location evidence="1">Cytoplasm</location>
    </subcellularLocation>
</comment>
<comment type="domain">
    <text evidence="1">The J domain is necessary and sufficient to stimulate DnaK ATPase activity. Zinc center 1 plays an important role in the autonomous, DnaK-independent chaperone activity of DnaJ. Zinc center 2 is essential for interaction with DnaK and for DnaJ activity.</text>
</comment>
<comment type="similarity">
    <text evidence="1">Belongs to the DnaJ family.</text>
</comment>
<gene>
    <name evidence="1" type="primary">dnaJ</name>
    <name type="ordered locus">Pden_2303</name>
</gene>